<proteinExistence type="evidence at protein level"/>
<accession>P06483</accession>
<evidence type="ECO:0000250" key="1"/>
<evidence type="ECO:0000255" key="2"/>
<evidence type="ECO:0000269" key="3">
    <source>
    </source>
</evidence>
<evidence type="ECO:0000305" key="4"/>
<keyword id="KW-0472">Membrane</keyword>
<keyword id="KW-0735">Signal-anchor</keyword>
<keyword id="KW-0812">Transmembrane</keyword>
<keyword id="KW-1133">Transmembrane helix</keyword>
<keyword id="KW-0261">Viral envelope protein</keyword>
<keyword id="KW-0946">Virion</keyword>
<dbReference type="EMBL" id="X01996">
    <property type="protein sequence ID" value="CAA26026.1"/>
    <property type="molecule type" value="Genomic_DNA"/>
</dbReference>
<dbReference type="EMBL" id="X01456">
    <property type="protein sequence ID" value="CAA25688.1"/>
    <property type="molecule type" value="Genomic_DNA"/>
</dbReference>
<dbReference type="EMBL" id="M10053">
    <property type="protein sequence ID" value="AAA66444.1"/>
    <property type="molecule type" value="Genomic_DNA"/>
</dbReference>
<dbReference type="RefSeq" id="YP_009137197.1">
    <property type="nucleotide sequence ID" value="NC_001798.2"/>
</dbReference>
<dbReference type="DNASU" id="1487332"/>
<dbReference type="GeneID" id="1487332"/>
<dbReference type="KEGG" id="vg:1487332"/>
<dbReference type="GO" id="GO:0016020">
    <property type="term" value="C:membrane"/>
    <property type="evidence" value="ECO:0007669"/>
    <property type="project" value="UniProtKB-KW"/>
</dbReference>
<dbReference type="GO" id="GO:0019031">
    <property type="term" value="C:viral envelope"/>
    <property type="evidence" value="ECO:0007669"/>
    <property type="project" value="UniProtKB-KW"/>
</dbReference>
<dbReference type="GO" id="GO:0055036">
    <property type="term" value="C:virion membrane"/>
    <property type="evidence" value="ECO:0007669"/>
    <property type="project" value="UniProtKB-SubCell"/>
</dbReference>
<dbReference type="InterPro" id="IPR018002">
    <property type="entry name" value="Herpes_UL45"/>
</dbReference>
<dbReference type="Pfam" id="PF05473">
    <property type="entry name" value="UL45"/>
    <property type="match status" value="1"/>
</dbReference>
<dbReference type="PIRSF" id="PIRSF003509">
    <property type="entry name" value="Herpes_UL45"/>
    <property type="match status" value="1"/>
</dbReference>
<sequence>MAFRASGPAYQPLAPAASPARARVPAVAWIGVGAIVGAFALVAALVLVPPRSSWGLSPCDSGWQEFNAGCVAWDPTPVEHEQAVGGCSAPATLIPRAAAKHLAALTRVQAERSSGYWWVNGDGIRTCLRLVDSVSGIDEFCEELAIRICYYPRSPGGFVRFVTSIRNALGLP</sequence>
<organismHost>
    <name type="scientific">Homo sapiens</name>
    <name type="common">Human</name>
    <dbReference type="NCBI Taxonomy" id="9606"/>
</organismHost>
<comment type="function">
    <text evidence="1">Important virulence factor of HSV neurotropism. Seems to be required for glycoprotein B-induced fusion. Dispensable for growth in vitro (By similarity).</text>
</comment>
<comment type="subcellular location">
    <subcellularLocation>
        <location evidence="3">Virion membrane</location>
        <topology evidence="3">Single-pass type II membrane protein</topology>
    </subcellularLocation>
    <text evidence="1">In transfected cells, it is retained within the ER.</text>
</comment>
<comment type="similarity">
    <text evidence="4">Belongs to the herpesviridae HHV-1 UL45 family.</text>
</comment>
<name>EV45_HHV23</name>
<protein>
    <recommendedName>
        <fullName>Envelope protein UL45</fullName>
    </recommendedName>
    <alternativeName>
        <fullName>18 kDa protein</fullName>
    </alternativeName>
</protein>
<reference key="1">
    <citation type="journal article" date="1985" name="J. Virol.">
        <title>Characterization of the gene encoding herpes simplex virus type 2 glycoprotein C and comparison with the type 1 counterpart.</title>
        <authorList>
            <person name="Swain M.A."/>
            <person name="Peet R.W."/>
            <person name="Galloway D.A."/>
        </authorList>
    </citation>
    <scope>NUCLEOTIDE SEQUENCE [GENOMIC DNA]</scope>
</reference>
<reference key="2">
    <citation type="journal article" date="1984" name="J. Virol.">
        <title>Extensive homology between the herpes simplex virus type 2 glycoprotein F gene and the herpes simplex virus type 1 glycoprotein C gene.</title>
        <authorList>
            <person name="Dowbenko D.J."/>
            <person name="Lasky L.A."/>
        </authorList>
    </citation>
    <scope>NUCLEOTIDE SEQUENCE [GENOMIC DNA] OF 1-144</scope>
</reference>
<reference key="3">
    <citation type="journal article" date="1998" name="J. Virol.">
        <title>Herpes simplex virus 2 UL45 is a type II membrane protein.</title>
        <authorList>
            <person name="Cockrell A.S."/>
            <person name="Muggeridge M.I."/>
        </authorList>
    </citation>
    <scope>SUBCELLULAR LOCATION</scope>
    <scope>TOPOLOGY</scope>
</reference>
<gene>
    <name type="ORF">UL45</name>
</gene>
<feature type="chain" id="PRO_0000116089" description="Envelope protein UL45">
    <location>
        <begin position="1"/>
        <end position="172"/>
    </location>
</feature>
<feature type="topological domain" description="Intravirion" evidence="2">
    <location>
        <begin position="1"/>
        <end position="27"/>
    </location>
</feature>
<feature type="transmembrane region" description="Helical; Signal-anchor for type II membrane protein" evidence="2">
    <location>
        <begin position="28"/>
        <end position="48"/>
    </location>
</feature>
<feature type="topological domain" description="Virion surface" evidence="2">
    <location>
        <begin position="49"/>
        <end position="172"/>
    </location>
</feature>
<feature type="sequence conflict" description="In Ref. 2; CAA25688." evidence="4" ref="2">
    <original>AAS</original>
    <variation>RPP</variation>
    <location>
        <begin position="16"/>
        <end position="18"/>
    </location>
</feature>
<feature type="sequence conflict" description="In Ref. 2; CAA25688." evidence="4" ref="2">
    <original>S</original>
    <variation>C</variation>
    <location>
        <position position="57"/>
    </location>
</feature>
<organism>
    <name type="scientific">Human herpesvirus 2 (strain 333)</name>
    <name type="common">HHV-2</name>
    <name type="synonym">Human herpes simplex virus 2</name>
    <dbReference type="NCBI Taxonomy" id="10313"/>
    <lineage>
        <taxon>Viruses</taxon>
        <taxon>Duplodnaviria</taxon>
        <taxon>Heunggongvirae</taxon>
        <taxon>Peploviricota</taxon>
        <taxon>Herviviricetes</taxon>
        <taxon>Herpesvirales</taxon>
        <taxon>Orthoherpesviridae</taxon>
        <taxon>Alphaherpesvirinae</taxon>
        <taxon>Simplexvirus</taxon>
        <taxon>Simplexvirus humanalpha2</taxon>
        <taxon>Human herpesvirus 2</taxon>
    </lineage>
</organism>